<reference key="1">
    <citation type="submission" date="2007-10" db="EMBL/GenBank/DDBJ databases">
        <title>Complete sequence of chromosome 1 of Burkholderia multivorans ATCC 17616.</title>
        <authorList>
            <person name="Copeland A."/>
            <person name="Lucas S."/>
            <person name="Lapidus A."/>
            <person name="Barry K."/>
            <person name="Glavina del Rio T."/>
            <person name="Dalin E."/>
            <person name="Tice H."/>
            <person name="Pitluck S."/>
            <person name="Chain P."/>
            <person name="Malfatti S."/>
            <person name="Shin M."/>
            <person name="Vergez L."/>
            <person name="Schmutz J."/>
            <person name="Larimer F."/>
            <person name="Land M."/>
            <person name="Hauser L."/>
            <person name="Kyrpides N."/>
            <person name="Kim E."/>
            <person name="Tiedje J."/>
            <person name="Richardson P."/>
        </authorList>
    </citation>
    <scope>NUCLEOTIDE SEQUENCE [LARGE SCALE GENOMIC DNA]</scope>
    <source>
        <strain>ATCC 17616 / 249</strain>
    </source>
</reference>
<reference key="2">
    <citation type="submission" date="2007-04" db="EMBL/GenBank/DDBJ databases">
        <title>Complete genome sequence of Burkholderia multivorans ATCC 17616.</title>
        <authorList>
            <person name="Ohtsubo Y."/>
            <person name="Yamashita A."/>
            <person name="Kurokawa K."/>
            <person name="Takami H."/>
            <person name="Yuhara S."/>
            <person name="Nishiyama E."/>
            <person name="Endo R."/>
            <person name="Miyazaki R."/>
            <person name="Ono A."/>
            <person name="Yano K."/>
            <person name="Ito M."/>
            <person name="Sota M."/>
            <person name="Yuji N."/>
            <person name="Hattori M."/>
            <person name="Tsuda M."/>
        </authorList>
    </citation>
    <scope>NUCLEOTIDE SEQUENCE [LARGE SCALE GENOMIC DNA]</scope>
    <source>
        <strain>ATCC 17616 / 249</strain>
    </source>
</reference>
<accession>A9AH79</accession>
<feature type="chain" id="PRO_1000144900" description="Putative iron-sulfur cluster insertion protein ErpA">
    <location>
        <begin position="1"/>
        <end position="123"/>
    </location>
</feature>
<feature type="binding site" evidence="1">
    <location>
        <position position="51"/>
    </location>
    <ligand>
        <name>iron-sulfur cluster</name>
        <dbReference type="ChEBI" id="CHEBI:30408"/>
    </ligand>
</feature>
<feature type="binding site" evidence="1">
    <location>
        <position position="115"/>
    </location>
    <ligand>
        <name>iron-sulfur cluster</name>
        <dbReference type="ChEBI" id="CHEBI:30408"/>
    </ligand>
</feature>
<feature type="binding site" evidence="1">
    <location>
        <position position="117"/>
    </location>
    <ligand>
        <name>iron-sulfur cluster</name>
        <dbReference type="ChEBI" id="CHEBI:30408"/>
    </ligand>
</feature>
<evidence type="ECO:0000255" key="1">
    <source>
        <dbReference type="HAMAP-Rule" id="MF_01380"/>
    </source>
</evidence>
<comment type="function">
    <text evidence="1">Required for insertion of 4Fe-4S clusters.</text>
</comment>
<comment type="cofactor">
    <cofactor evidence="1">
        <name>iron-sulfur cluster</name>
        <dbReference type="ChEBI" id="CHEBI:30408"/>
    </cofactor>
    <text evidence="1">Binds 1 iron-sulfur cluster per subunit.</text>
</comment>
<comment type="subunit">
    <text evidence="1">Homodimer.</text>
</comment>
<comment type="similarity">
    <text evidence="1">Belongs to the HesB/IscA family.</text>
</comment>
<proteinExistence type="inferred from homology"/>
<organism>
    <name type="scientific">Burkholderia multivorans (strain ATCC 17616 / 249)</name>
    <dbReference type="NCBI Taxonomy" id="395019"/>
    <lineage>
        <taxon>Bacteria</taxon>
        <taxon>Pseudomonadati</taxon>
        <taxon>Pseudomonadota</taxon>
        <taxon>Betaproteobacteria</taxon>
        <taxon>Burkholderiales</taxon>
        <taxon>Burkholderiaceae</taxon>
        <taxon>Burkholderia</taxon>
        <taxon>Burkholderia cepacia complex</taxon>
    </lineage>
</organism>
<gene>
    <name evidence="1" type="primary">erpA</name>
    <name type="ordered locus">Bmul_2702</name>
    <name type="ordered locus">BMULJ_00536</name>
</gene>
<protein>
    <recommendedName>
        <fullName evidence="1">Putative iron-sulfur cluster insertion protein ErpA</fullName>
    </recommendedName>
</protein>
<sequence length="123" mass="13271">MNAVTESAATTTEMPAPFVFTDAAADKVKQLIDEEGNPDLKLRVFVQGGGCSGFQYGFTFDEEVNEDDTVMNKNGVQLLIDSMSYQYLVGAEIDYKDDLNGAQFVIKNPNATTTCGCGSSFSV</sequence>
<keyword id="KW-0408">Iron</keyword>
<keyword id="KW-0411">Iron-sulfur</keyword>
<keyword id="KW-0479">Metal-binding</keyword>
<keyword id="KW-1185">Reference proteome</keyword>
<name>ERPA_BURM1</name>
<dbReference type="EMBL" id="CP000868">
    <property type="protein sequence ID" value="ABX16386.1"/>
    <property type="molecule type" value="Genomic_DNA"/>
</dbReference>
<dbReference type="EMBL" id="AP009385">
    <property type="protein sequence ID" value="BAG42500.1"/>
    <property type="molecule type" value="Genomic_DNA"/>
</dbReference>
<dbReference type="RefSeq" id="WP_006401687.1">
    <property type="nucleotide sequence ID" value="NC_010804.1"/>
</dbReference>
<dbReference type="SMR" id="A9AH79"/>
<dbReference type="STRING" id="395019.BMULJ_00536"/>
<dbReference type="GeneID" id="93171637"/>
<dbReference type="KEGG" id="bmj:BMULJ_00536"/>
<dbReference type="KEGG" id="bmu:Bmul_2702"/>
<dbReference type="eggNOG" id="COG0316">
    <property type="taxonomic scope" value="Bacteria"/>
</dbReference>
<dbReference type="HOGENOM" id="CLU_069054_5_3_4"/>
<dbReference type="Proteomes" id="UP000008815">
    <property type="component" value="Chromosome 1"/>
</dbReference>
<dbReference type="GO" id="GO:0051537">
    <property type="term" value="F:2 iron, 2 sulfur cluster binding"/>
    <property type="evidence" value="ECO:0007669"/>
    <property type="project" value="TreeGrafter"/>
</dbReference>
<dbReference type="GO" id="GO:0051539">
    <property type="term" value="F:4 iron, 4 sulfur cluster binding"/>
    <property type="evidence" value="ECO:0007669"/>
    <property type="project" value="TreeGrafter"/>
</dbReference>
<dbReference type="GO" id="GO:0005506">
    <property type="term" value="F:iron ion binding"/>
    <property type="evidence" value="ECO:0007669"/>
    <property type="project" value="UniProtKB-UniRule"/>
</dbReference>
<dbReference type="GO" id="GO:0016226">
    <property type="term" value="P:iron-sulfur cluster assembly"/>
    <property type="evidence" value="ECO:0007669"/>
    <property type="project" value="UniProtKB-UniRule"/>
</dbReference>
<dbReference type="FunFam" id="2.60.300.12:FF:000002">
    <property type="entry name" value="Iron-sulfur cluster insertion protein ErpA"/>
    <property type="match status" value="1"/>
</dbReference>
<dbReference type="Gene3D" id="2.60.300.12">
    <property type="entry name" value="HesB-like domain"/>
    <property type="match status" value="1"/>
</dbReference>
<dbReference type="HAMAP" id="MF_01380">
    <property type="entry name" value="Fe_S_insert_ErpA"/>
    <property type="match status" value="1"/>
</dbReference>
<dbReference type="InterPro" id="IPR000361">
    <property type="entry name" value="FeS_biogenesis"/>
</dbReference>
<dbReference type="InterPro" id="IPR016092">
    <property type="entry name" value="FeS_cluster_insertion"/>
</dbReference>
<dbReference type="InterPro" id="IPR017870">
    <property type="entry name" value="FeS_cluster_insertion_CS"/>
</dbReference>
<dbReference type="InterPro" id="IPR023063">
    <property type="entry name" value="FeS_cluster_insertion_RrpA"/>
</dbReference>
<dbReference type="InterPro" id="IPR035903">
    <property type="entry name" value="HesB-like_dom_sf"/>
</dbReference>
<dbReference type="NCBIfam" id="TIGR00049">
    <property type="entry name" value="iron-sulfur cluster assembly accessory protein"/>
    <property type="match status" value="1"/>
</dbReference>
<dbReference type="NCBIfam" id="NF010147">
    <property type="entry name" value="PRK13623.1"/>
    <property type="match status" value="1"/>
</dbReference>
<dbReference type="PANTHER" id="PTHR43011">
    <property type="entry name" value="IRON-SULFUR CLUSTER ASSEMBLY 2 HOMOLOG, MITOCHONDRIAL"/>
    <property type="match status" value="1"/>
</dbReference>
<dbReference type="PANTHER" id="PTHR43011:SF1">
    <property type="entry name" value="IRON-SULFUR CLUSTER ASSEMBLY 2 HOMOLOG, MITOCHONDRIAL"/>
    <property type="match status" value="1"/>
</dbReference>
<dbReference type="Pfam" id="PF01521">
    <property type="entry name" value="Fe-S_biosyn"/>
    <property type="match status" value="1"/>
</dbReference>
<dbReference type="SUPFAM" id="SSF89360">
    <property type="entry name" value="HesB-like domain"/>
    <property type="match status" value="1"/>
</dbReference>
<dbReference type="PROSITE" id="PS01152">
    <property type="entry name" value="HESB"/>
    <property type="match status" value="1"/>
</dbReference>